<protein>
    <recommendedName>
        <fullName evidence="1">Large ribosomal subunit protein bL33</fullName>
    </recommendedName>
    <alternativeName>
        <fullName evidence="2">50S ribosomal protein L33</fullName>
    </alternativeName>
</protein>
<comment type="similarity">
    <text evidence="1">Belongs to the bacterial ribosomal protein bL33 family.</text>
</comment>
<feature type="chain" id="PRO_0000356671" description="Large ribosomal subunit protein bL33">
    <location>
        <begin position="1"/>
        <end position="55"/>
    </location>
</feature>
<dbReference type="EMBL" id="CP000738">
    <property type="protein sequence ID" value="ABR59782.1"/>
    <property type="molecule type" value="Genomic_DNA"/>
</dbReference>
<dbReference type="RefSeq" id="WP_011975118.1">
    <property type="nucleotide sequence ID" value="NC_009636.1"/>
</dbReference>
<dbReference type="RefSeq" id="YP_001326617.1">
    <property type="nucleotide sequence ID" value="NC_009636.1"/>
</dbReference>
<dbReference type="SMR" id="A6U802"/>
<dbReference type="STRING" id="366394.Smed_0927"/>
<dbReference type="GeneID" id="61612238"/>
<dbReference type="KEGG" id="smd:Smed_0927"/>
<dbReference type="PATRIC" id="fig|366394.8.peg.4043"/>
<dbReference type="eggNOG" id="COG0267">
    <property type="taxonomic scope" value="Bacteria"/>
</dbReference>
<dbReference type="HOGENOM" id="CLU_190949_1_1_5"/>
<dbReference type="Proteomes" id="UP000001108">
    <property type="component" value="Chromosome"/>
</dbReference>
<dbReference type="GO" id="GO:0022625">
    <property type="term" value="C:cytosolic large ribosomal subunit"/>
    <property type="evidence" value="ECO:0007669"/>
    <property type="project" value="TreeGrafter"/>
</dbReference>
<dbReference type="GO" id="GO:0003735">
    <property type="term" value="F:structural constituent of ribosome"/>
    <property type="evidence" value="ECO:0007669"/>
    <property type="project" value="InterPro"/>
</dbReference>
<dbReference type="GO" id="GO:0006412">
    <property type="term" value="P:translation"/>
    <property type="evidence" value="ECO:0007669"/>
    <property type="project" value="UniProtKB-UniRule"/>
</dbReference>
<dbReference type="Gene3D" id="2.20.28.120">
    <property type="entry name" value="Ribosomal protein L33"/>
    <property type="match status" value="1"/>
</dbReference>
<dbReference type="HAMAP" id="MF_00294">
    <property type="entry name" value="Ribosomal_bL33"/>
    <property type="match status" value="1"/>
</dbReference>
<dbReference type="InterPro" id="IPR001705">
    <property type="entry name" value="Ribosomal_bL33"/>
</dbReference>
<dbReference type="InterPro" id="IPR018264">
    <property type="entry name" value="Ribosomal_bL33_CS"/>
</dbReference>
<dbReference type="InterPro" id="IPR038584">
    <property type="entry name" value="Ribosomal_bL33_sf"/>
</dbReference>
<dbReference type="InterPro" id="IPR011332">
    <property type="entry name" value="Ribosomal_zn-bd"/>
</dbReference>
<dbReference type="NCBIfam" id="NF001860">
    <property type="entry name" value="PRK00595.1"/>
    <property type="match status" value="1"/>
</dbReference>
<dbReference type="NCBIfam" id="TIGR01023">
    <property type="entry name" value="rpmG_bact"/>
    <property type="match status" value="1"/>
</dbReference>
<dbReference type="PANTHER" id="PTHR15238">
    <property type="entry name" value="54S RIBOSOMAL PROTEIN L39, MITOCHONDRIAL"/>
    <property type="match status" value="1"/>
</dbReference>
<dbReference type="PANTHER" id="PTHR15238:SF1">
    <property type="entry name" value="LARGE RIBOSOMAL SUBUNIT PROTEIN BL33M"/>
    <property type="match status" value="1"/>
</dbReference>
<dbReference type="Pfam" id="PF00471">
    <property type="entry name" value="Ribosomal_L33"/>
    <property type="match status" value="1"/>
</dbReference>
<dbReference type="SUPFAM" id="SSF57829">
    <property type="entry name" value="Zn-binding ribosomal proteins"/>
    <property type="match status" value="1"/>
</dbReference>
<dbReference type="PROSITE" id="PS00582">
    <property type="entry name" value="RIBOSOMAL_L33"/>
    <property type="match status" value="1"/>
</dbReference>
<evidence type="ECO:0000255" key="1">
    <source>
        <dbReference type="HAMAP-Rule" id="MF_00294"/>
    </source>
</evidence>
<evidence type="ECO:0000305" key="2"/>
<reference key="1">
    <citation type="submission" date="2007-06" db="EMBL/GenBank/DDBJ databases">
        <title>Complete sequence of Sinorhizobium medicae WSM419 chromosome.</title>
        <authorList>
            <consortium name="US DOE Joint Genome Institute"/>
            <person name="Copeland A."/>
            <person name="Lucas S."/>
            <person name="Lapidus A."/>
            <person name="Barry K."/>
            <person name="Glavina del Rio T."/>
            <person name="Dalin E."/>
            <person name="Tice H."/>
            <person name="Pitluck S."/>
            <person name="Chain P."/>
            <person name="Malfatti S."/>
            <person name="Shin M."/>
            <person name="Vergez L."/>
            <person name="Schmutz J."/>
            <person name="Larimer F."/>
            <person name="Land M."/>
            <person name="Hauser L."/>
            <person name="Kyrpides N."/>
            <person name="Mikhailova N."/>
            <person name="Reeve W.G."/>
            <person name="Richardson P."/>
        </authorList>
    </citation>
    <scope>NUCLEOTIDE SEQUENCE [LARGE SCALE GENOMIC DNA]</scope>
    <source>
        <strain>WSM419</strain>
    </source>
</reference>
<gene>
    <name evidence="1" type="primary">rpmG</name>
    <name type="ordered locus">Smed_0927</name>
</gene>
<organism>
    <name type="scientific">Sinorhizobium medicae (strain WSM419)</name>
    <name type="common">Ensifer medicae</name>
    <dbReference type="NCBI Taxonomy" id="366394"/>
    <lineage>
        <taxon>Bacteria</taxon>
        <taxon>Pseudomonadati</taxon>
        <taxon>Pseudomonadota</taxon>
        <taxon>Alphaproteobacteria</taxon>
        <taxon>Hyphomicrobiales</taxon>
        <taxon>Rhizobiaceae</taxon>
        <taxon>Sinorhizobium/Ensifer group</taxon>
        <taxon>Sinorhizobium</taxon>
    </lineage>
</organism>
<accession>A6U802</accession>
<sequence length="55" mass="6314">MAKATTIKIKLLSTADTGFFYVTTKNSRTMTDKMTKTKYDPVARKHVEFKEAKIK</sequence>
<name>RL33_SINMW</name>
<keyword id="KW-0687">Ribonucleoprotein</keyword>
<keyword id="KW-0689">Ribosomal protein</keyword>
<proteinExistence type="inferred from homology"/>